<dbReference type="EC" id="7.1.1.2" evidence="2"/>
<dbReference type="EMBL" id="CR859585">
    <property type="protein sequence ID" value="CAH91749.1"/>
    <property type="molecule type" value="mRNA"/>
</dbReference>
<dbReference type="RefSeq" id="NP_001126016.1">
    <property type="nucleotide sequence ID" value="NM_001132544.2"/>
</dbReference>
<dbReference type="SMR" id="P0CB67"/>
<dbReference type="FunCoup" id="P0CB67">
    <property type="interactions" value="1597"/>
</dbReference>
<dbReference type="STRING" id="9601.ENSPPYP00000014646"/>
<dbReference type="GeneID" id="100172962"/>
<dbReference type="KEGG" id="pon:100172962"/>
<dbReference type="CTD" id="4719"/>
<dbReference type="eggNOG" id="KOG2282">
    <property type="taxonomic scope" value="Eukaryota"/>
</dbReference>
<dbReference type="InParanoid" id="P0CB67"/>
<dbReference type="OrthoDB" id="10249365at2759"/>
<dbReference type="Proteomes" id="UP000001595">
    <property type="component" value="Unplaced"/>
</dbReference>
<dbReference type="GO" id="GO:0005743">
    <property type="term" value="C:mitochondrial inner membrane"/>
    <property type="evidence" value="ECO:0000250"/>
    <property type="project" value="UniProtKB"/>
</dbReference>
<dbReference type="GO" id="GO:0005758">
    <property type="term" value="C:mitochondrial intermembrane space"/>
    <property type="evidence" value="ECO:0000250"/>
    <property type="project" value="UniProtKB"/>
</dbReference>
<dbReference type="GO" id="GO:0005739">
    <property type="term" value="C:mitochondrion"/>
    <property type="evidence" value="ECO:0000250"/>
    <property type="project" value="UniProtKB"/>
</dbReference>
<dbReference type="GO" id="GO:0045271">
    <property type="term" value="C:respiratory chain complex I"/>
    <property type="evidence" value="ECO:0000250"/>
    <property type="project" value="UniProtKB"/>
</dbReference>
<dbReference type="GO" id="GO:0051537">
    <property type="term" value="F:2 iron, 2 sulfur cluster binding"/>
    <property type="evidence" value="ECO:0007669"/>
    <property type="project" value="UniProtKB-KW"/>
</dbReference>
<dbReference type="GO" id="GO:0051539">
    <property type="term" value="F:4 iron, 4 sulfur cluster binding"/>
    <property type="evidence" value="ECO:0007669"/>
    <property type="project" value="UniProtKB-KW"/>
</dbReference>
<dbReference type="GO" id="GO:0046872">
    <property type="term" value="F:metal ion binding"/>
    <property type="evidence" value="ECO:0007669"/>
    <property type="project" value="UniProtKB-KW"/>
</dbReference>
<dbReference type="GO" id="GO:0008137">
    <property type="term" value="F:NADH dehydrogenase (ubiquinone) activity"/>
    <property type="evidence" value="ECO:0000250"/>
    <property type="project" value="UniProtKB"/>
</dbReference>
<dbReference type="GO" id="GO:0045333">
    <property type="term" value="P:cellular respiration"/>
    <property type="evidence" value="ECO:0000250"/>
    <property type="project" value="UniProtKB"/>
</dbReference>
<dbReference type="GO" id="GO:0006120">
    <property type="term" value="P:mitochondrial electron transport, NADH to ubiquinone"/>
    <property type="evidence" value="ECO:0000250"/>
    <property type="project" value="UniProtKB"/>
</dbReference>
<dbReference type="GO" id="GO:0032981">
    <property type="term" value="P:mitochondrial respiratory chain complex I assembly"/>
    <property type="evidence" value="ECO:0000250"/>
    <property type="project" value="UniProtKB"/>
</dbReference>
<dbReference type="CDD" id="cd00207">
    <property type="entry name" value="fer2"/>
    <property type="match status" value="1"/>
</dbReference>
<dbReference type="CDD" id="cd02773">
    <property type="entry name" value="MopB_Res-Cmplx1_Nad11"/>
    <property type="match status" value="1"/>
</dbReference>
<dbReference type="FunFam" id="3.10.20.740:FF:000001">
    <property type="entry name" value="NADH-quinone oxidoreductase subunit G"/>
    <property type="match status" value="1"/>
</dbReference>
<dbReference type="FunFam" id="3.30.200.210:FF:000002">
    <property type="entry name" value="NADH-ubiquinone oxidoreductase 75 kDa subunit"/>
    <property type="match status" value="1"/>
</dbReference>
<dbReference type="FunFam" id="3.30.70.20:FF:000002">
    <property type="entry name" value="NADH-ubiquinone oxidoreductase 75 kDa subunit"/>
    <property type="match status" value="1"/>
</dbReference>
<dbReference type="FunFam" id="3.40.50.740:FF:000002">
    <property type="entry name" value="NADH-ubiquinone oxidoreductase 75 kDa subunit, mitochondrial"/>
    <property type="match status" value="1"/>
</dbReference>
<dbReference type="Gene3D" id="3.10.20.740">
    <property type="match status" value="1"/>
</dbReference>
<dbReference type="Gene3D" id="3.30.200.210">
    <property type="match status" value="1"/>
</dbReference>
<dbReference type="Gene3D" id="3.30.70.20">
    <property type="match status" value="1"/>
</dbReference>
<dbReference type="Gene3D" id="3.40.50.740">
    <property type="match status" value="1"/>
</dbReference>
<dbReference type="InterPro" id="IPR036010">
    <property type="entry name" value="2Fe-2S_ferredoxin-like_sf"/>
</dbReference>
<dbReference type="InterPro" id="IPR001041">
    <property type="entry name" value="2Fe-2S_ferredoxin-type"/>
</dbReference>
<dbReference type="InterPro" id="IPR006656">
    <property type="entry name" value="Mopterin_OxRdtase"/>
</dbReference>
<dbReference type="InterPro" id="IPR006963">
    <property type="entry name" value="Mopterin_OxRdtase_4Fe-4S_dom"/>
</dbReference>
<dbReference type="InterPro" id="IPR000283">
    <property type="entry name" value="NADH_UbQ_OxRdtase_75kDa_su_CS"/>
</dbReference>
<dbReference type="InterPro" id="IPR054351">
    <property type="entry name" value="NADH_UbQ_OxRdtase_ferredoxin"/>
</dbReference>
<dbReference type="InterPro" id="IPR010228">
    <property type="entry name" value="NADH_UbQ_OxRdtase_Gsu"/>
</dbReference>
<dbReference type="InterPro" id="IPR019574">
    <property type="entry name" value="NADH_UbQ_OxRdtase_Gsu_4Fe4S-bd"/>
</dbReference>
<dbReference type="InterPro" id="IPR015405">
    <property type="entry name" value="NDUFS1-like_C"/>
</dbReference>
<dbReference type="InterPro" id="IPR050123">
    <property type="entry name" value="Prok_molybdopt-oxidoreductase"/>
</dbReference>
<dbReference type="NCBIfam" id="TIGR01973">
    <property type="entry name" value="NuoG"/>
    <property type="match status" value="1"/>
</dbReference>
<dbReference type="PANTHER" id="PTHR43105:SF13">
    <property type="entry name" value="NADH-UBIQUINONE OXIDOREDUCTASE 75 KDA SUBUNIT, MITOCHONDRIAL"/>
    <property type="match status" value="1"/>
</dbReference>
<dbReference type="PANTHER" id="PTHR43105">
    <property type="entry name" value="RESPIRATORY NITRATE REDUCTASE"/>
    <property type="match status" value="1"/>
</dbReference>
<dbReference type="Pfam" id="PF13510">
    <property type="entry name" value="Fer2_4"/>
    <property type="match status" value="1"/>
</dbReference>
<dbReference type="Pfam" id="PF22151">
    <property type="entry name" value="Fer4_NDSU1"/>
    <property type="match status" value="1"/>
</dbReference>
<dbReference type="Pfam" id="PF22117">
    <property type="entry name" value="Fer4_Nqo3"/>
    <property type="match status" value="1"/>
</dbReference>
<dbReference type="Pfam" id="PF00384">
    <property type="entry name" value="Molybdopterin"/>
    <property type="match status" value="1"/>
</dbReference>
<dbReference type="Pfam" id="PF10588">
    <property type="entry name" value="NADH-G_4Fe-4S_3"/>
    <property type="match status" value="1"/>
</dbReference>
<dbReference type="Pfam" id="PF09326">
    <property type="entry name" value="NADH_dhqG_C"/>
    <property type="match status" value="1"/>
</dbReference>
<dbReference type="SMART" id="SM00929">
    <property type="entry name" value="NADH-G_4Fe-4S_3"/>
    <property type="match status" value="1"/>
</dbReference>
<dbReference type="SUPFAM" id="SSF54292">
    <property type="entry name" value="2Fe-2S ferredoxin-like"/>
    <property type="match status" value="1"/>
</dbReference>
<dbReference type="SUPFAM" id="SSF54862">
    <property type="entry name" value="4Fe-4S ferredoxins"/>
    <property type="match status" value="1"/>
</dbReference>
<dbReference type="SUPFAM" id="SSF53706">
    <property type="entry name" value="Formate dehydrogenase/DMSO reductase, domains 1-3"/>
    <property type="match status" value="1"/>
</dbReference>
<dbReference type="PROSITE" id="PS51085">
    <property type="entry name" value="2FE2S_FER_2"/>
    <property type="match status" value="1"/>
</dbReference>
<dbReference type="PROSITE" id="PS51839">
    <property type="entry name" value="4FE4S_HC3"/>
    <property type="match status" value="1"/>
</dbReference>
<dbReference type="PROSITE" id="PS51669">
    <property type="entry name" value="4FE4S_MOW_BIS_MGD"/>
    <property type="match status" value="1"/>
</dbReference>
<dbReference type="PROSITE" id="PS00641">
    <property type="entry name" value="COMPLEX1_75K_1"/>
    <property type="match status" value="1"/>
</dbReference>
<dbReference type="PROSITE" id="PS00642">
    <property type="entry name" value="COMPLEX1_75K_2"/>
    <property type="match status" value="1"/>
</dbReference>
<dbReference type="PROSITE" id="PS00643">
    <property type="entry name" value="COMPLEX1_75K_3"/>
    <property type="match status" value="1"/>
</dbReference>
<protein>
    <recommendedName>
        <fullName>NADH-ubiquinone oxidoreductase 75 kDa subunit, mitochondrial</fullName>
        <ecNumber evidence="2">7.1.1.2</ecNumber>
    </recommendedName>
    <alternativeName>
        <fullName>Complex I-75kD</fullName>
        <shortName>CI-75kD</shortName>
    </alternativeName>
</protein>
<evidence type="ECO:0000250" key="1">
    <source>
        <dbReference type="UniProtKB" id="P15690"/>
    </source>
</evidence>
<evidence type="ECO:0000250" key="2">
    <source>
        <dbReference type="UniProtKB" id="P28331"/>
    </source>
</evidence>
<evidence type="ECO:0000250" key="3">
    <source>
        <dbReference type="UniProtKB" id="Q56223"/>
    </source>
</evidence>
<evidence type="ECO:0000250" key="4">
    <source>
        <dbReference type="UniProtKB" id="Q91VD9"/>
    </source>
</evidence>
<evidence type="ECO:0000255" key="5">
    <source>
        <dbReference type="PROSITE-ProRule" id="PRU00465"/>
    </source>
</evidence>
<evidence type="ECO:0000255" key="6">
    <source>
        <dbReference type="PROSITE-ProRule" id="PRU01004"/>
    </source>
</evidence>
<evidence type="ECO:0000255" key="7">
    <source>
        <dbReference type="PROSITE-ProRule" id="PRU01184"/>
    </source>
</evidence>
<evidence type="ECO:0000305" key="8"/>
<reference key="1">
    <citation type="submission" date="2004-11" db="EMBL/GenBank/DDBJ databases">
        <authorList>
            <consortium name="The German cDNA consortium"/>
        </authorList>
    </citation>
    <scope>NUCLEOTIDE SEQUENCE [LARGE SCALE MRNA]</scope>
    <source>
        <tissue>Heart</tissue>
    </source>
</reference>
<comment type="function">
    <text evidence="2">Core subunit of the mitochondrial membrane respiratory chain NADH dehydrogenase (Complex I) which catalyzes electron transfer from NADH through the respiratory chain, using ubiquinone as an electron acceptor (By similarity). Essential for catalysing the entry and efficient transfer of electrons within complex I (By similarity). Plays a key role in the assembly and stability of complex I and participates in the association of complex I with ubiquinol-cytochrome reductase complex (Complex III) to form supercomplexes (By similarity).</text>
</comment>
<comment type="catalytic activity">
    <reaction evidence="2">
        <text>a ubiquinone + NADH + 5 H(+)(in) = a ubiquinol + NAD(+) + 4 H(+)(out)</text>
        <dbReference type="Rhea" id="RHEA:29091"/>
        <dbReference type="Rhea" id="RHEA-COMP:9565"/>
        <dbReference type="Rhea" id="RHEA-COMP:9566"/>
        <dbReference type="ChEBI" id="CHEBI:15378"/>
        <dbReference type="ChEBI" id="CHEBI:16389"/>
        <dbReference type="ChEBI" id="CHEBI:17976"/>
        <dbReference type="ChEBI" id="CHEBI:57540"/>
        <dbReference type="ChEBI" id="CHEBI:57945"/>
        <dbReference type="EC" id="7.1.1.2"/>
    </reaction>
</comment>
<comment type="cofactor">
    <cofactor evidence="3">
        <name>[2Fe-2S] cluster</name>
        <dbReference type="ChEBI" id="CHEBI:190135"/>
    </cofactor>
    <text evidence="3">Binds 1 [2Fe-2S] cluster per subunit.</text>
</comment>
<comment type="cofactor">
    <cofactor evidence="3">
        <name>[4Fe-4S] cluster</name>
        <dbReference type="ChEBI" id="CHEBI:49883"/>
    </cofactor>
    <text evidence="3">Binds 2 [4Fe-4S] clusters per subunit.</text>
</comment>
<comment type="subunit">
    <text evidence="1 2 4">Core subunit of respiratory chain NADH dehydrogenase (Complex I) which is composed of 45 different subunits (By similarity). This is the largest subunit of complex I and it is a component of the iron-sulfur (IP) fragment of the enzyme (By similarity). Complex I associates with ubiquinol-cytochrome reductase complex (Complex III) to form supercomplexes (By similarity). Interacts with MDM2 and AKAP1 (By similarity).</text>
</comment>
<comment type="subcellular location">
    <subcellularLocation>
        <location evidence="1">Mitochondrion inner membrane</location>
        <topology evidence="1">Peripheral membrane protein</topology>
        <orientation evidence="1">Matrix side</orientation>
    </subcellularLocation>
</comment>
<comment type="similarity">
    <text evidence="8">Belongs to the complex I 75 kDa subunit family.</text>
</comment>
<proteinExistence type="evidence at transcript level"/>
<feature type="transit peptide" description="Mitochondrion" evidence="1">
    <location>
        <begin position="1"/>
        <end position="23"/>
    </location>
</feature>
<feature type="chain" id="PRO_0000019970" description="NADH-ubiquinone oxidoreductase 75 kDa subunit, mitochondrial">
    <location>
        <begin position="24"/>
        <end position="727"/>
    </location>
</feature>
<feature type="domain" description="2Fe-2S ferredoxin-type" evidence="5">
    <location>
        <begin position="30"/>
        <end position="108"/>
    </location>
</feature>
<feature type="domain" description="4Fe-4S His(Cys)3-ligated-type" evidence="7">
    <location>
        <begin position="108"/>
        <end position="147"/>
    </location>
</feature>
<feature type="domain" description="4Fe-4S Mo/W bis-MGD-type" evidence="6">
    <location>
        <begin position="245"/>
        <end position="301"/>
    </location>
</feature>
<feature type="binding site" evidence="3">
    <location>
        <position position="64"/>
    </location>
    <ligand>
        <name>[2Fe-2S] cluster</name>
        <dbReference type="ChEBI" id="CHEBI:190135"/>
    </ligand>
</feature>
<feature type="binding site" evidence="3">
    <location>
        <position position="75"/>
    </location>
    <ligand>
        <name>[2Fe-2S] cluster</name>
        <dbReference type="ChEBI" id="CHEBI:190135"/>
    </ligand>
</feature>
<feature type="binding site" evidence="3">
    <location>
        <position position="78"/>
    </location>
    <ligand>
        <name>[2Fe-2S] cluster</name>
        <dbReference type="ChEBI" id="CHEBI:190135"/>
    </ligand>
</feature>
<feature type="binding site" evidence="3">
    <location>
        <position position="92"/>
    </location>
    <ligand>
        <name>[2Fe-2S] cluster</name>
        <dbReference type="ChEBI" id="CHEBI:190135"/>
    </ligand>
</feature>
<feature type="binding site" evidence="7">
    <location>
        <position position="124"/>
    </location>
    <ligand>
        <name>[4Fe-4S] cluster</name>
        <dbReference type="ChEBI" id="CHEBI:49883"/>
        <label>1</label>
    </ligand>
</feature>
<feature type="binding site" evidence="7">
    <location>
        <position position="128"/>
    </location>
    <ligand>
        <name>[4Fe-4S] cluster</name>
        <dbReference type="ChEBI" id="CHEBI:49883"/>
        <label>1</label>
    </ligand>
</feature>
<feature type="binding site" evidence="7">
    <location>
        <position position="131"/>
    </location>
    <ligand>
        <name>[4Fe-4S] cluster</name>
        <dbReference type="ChEBI" id="CHEBI:49883"/>
        <label>1</label>
    </ligand>
</feature>
<feature type="binding site" evidence="7">
    <location>
        <position position="137"/>
    </location>
    <ligand>
        <name>[4Fe-4S] cluster</name>
        <dbReference type="ChEBI" id="CHEBI:49883"/>
        <label>1</label>
    </ligand>
</feature>
<feature type="binding site" evidence="3">
    <location>
        <position position="176"/>
    </location>
    <ligand>
        <name>[4Fe-4S] cluster</name>
        <dbReference type="ChEBI" id="CHEBI:49883"/>
        <label>2</label>
    </ligand>
</feature>
<feature type="binding site" evidence="3">
    <location>
        <position position="179"/>
    </location>
    <ligand>
        <name>[4Fe-4S] cluster</name>
        <dbReference type="ChEBI" id="CHEBI:49883"/>
        <label>2</label>
    </ligand>
</feature>
<feature type="binding site" evidence="3">
    <location>
        <position position="182"/>
    </location>
    <ligand>
        <name>[4Fe-4S] cluster</name>
        <dbReference type="ChEBI" id="CHEBI:49883"/>
        <label>2</label>
    </ligand>
</feature>
<feature type="binding site" evidence="3">
    <location>
        <position position="226"/>
    </location>
    <ligand>
        <name>[4Fe-4S] cluster</name>
        <dbReference type="ChEBI" id="CHEBI:49883"/>
        <label>2</label>
    </ligand>
</feature>
<feature type="modified residue" description="N6-acetyllysine" evidence="4">
    <location>
        <position position="84"/>
    </location>
</feature>
<feature type="modified residue" description="N6-acetyllysine" evidence="4">
    <location>
        <position position="467"/>
    </location>
</feature>
<feature type="modified residue" description="N6-acetyllysine" evidence="4">
    <location>
        <position position="499"/>
    </location>
</feature>
<feature type="modified residue" description="N6-acetyllysine" evidence="4">
    <location>
        <position position="709"/>
    </location>
</feature>
<sequence>MLRIPVRKALVGLSKSPKGCVRTTATAASNLIEVFVDGQSVMVEPGTTVLQACEKVGMQIPRFCYHERLSVAGNCRMCLVEIEKAPKVVAACAMPVMKGWNILTNSEKSKKAREGVMELLLANHPLDCPICDQGGECDLQDQSMMFGNDRSRFLEGKRAVEDKNIGPLVKTIMTRCIQCTRCIRFASEIAGVDDLGTTGRGNDMQVGTYIEKMFMSELSGNIIDICPVGALTSKPYAFTARPWETRKTESIDVMDAVGSNIVVSTRTGEVMRILPRMHEDINEEWISDKTRFAYDGLKRQRLTEPMVRNEKGLLTYTSWEDALSRVAGMLQSFQGKDVAAIAGGLVDAEALVALKDLLNRVDSDTLCTEEVFPTAGAGTDLRSNYLLNTTIAGVEEADVVLLVGTNPRFEAPLFNARIRKSWLHNDLKVALIGSPVDLTYTYDHLGDSPKILQDIASGSHPFSQVLKEAKKPMVVLGSSALQRNDGAAILAAFSSIAQKIRMTSGVTGDWKVMNILHRIASQVAALDLGYKPGVEAIRKNPPRLLFLLGADGGCITRQDLPKDCFIIYQGHHGDVGAPIADVILPGAAYTEKSATYVNTEGRAQQTKVAVTPPGLAREDWKIIRALSEIAGVTLPYDTLDQVRNRLEEVSPNLVRYDDIEGANYFQQANELSKLVNQQLLADPLVPPQLTIKDFYMTDSISRASQTMAKCVKAVTEGAQAVEEPSIC</sequence>
<organism>
    <name type="scientific">Pongo abelii</name>
    <name type="common">Sumatran orangutan</name>
    <name type="synonym">Pongo pygmaeus abelii</name>
    <dbReference type="NCBI Taxonomy" id="9601"/>
    <lineage>
        <taxon>Eukaryota</taxon>
        <taxon>Metazoa</taxon>
        <taxon>Chordata</taxon>
        <taxon>Craniata</taxon>
        <taxon>Vertebrata</taxon>
        <taxon>Euteleostomi</taxon>
        <taxon>Mammalia</taxon>
        <taxon>Eutheria</taxon>
        <taxon>Euarchontoglires</taxon>
        <taxon>Primates</taxon>
        <taxon>Haplorrhini</taxon>
        <taxon>Catarrhini</taxon>
        <taxon>Hominidae</taxon>
        <taxon>Pongo</taxon>
    </lineage>
</organism>
<keyword id="KW-0001">2Fe-2S</keyword>
<keyword id="KW-0004">4Fe-4S</keyword>
<keyword id="KW-0007">Acetylation</keyword>
<keyword id="KW-0249">Electron transport</keyword>
<keyword id="KW-0408">Iron</keyword>
<keyword id="KW-0411">Iron-sulfur</keyword>
<keyword id="KW-0472">Membrane</keyword>
<keyword id="KW-0479">Metal-binding</keyword>
<keyword id="KW-0496">Mitochondrion</keyword>
<keyword id="KW-0999">Mitochondrion inner membrane</keyword>
<keyword id="KW-0520">NAD</keyword>
<keyword id="KW-0560">Oxidoreductase</keyword>
<keyword id="KW-1185">Reference proteome</keyword>
<keyword id="KW-0679">Respiratory chain</keyword>
<keyword id="KW-0809">Transit peptide</keyword>
<keyword id="KW-1278">Translocase</keyword>
<keyword id="KW-0813">Transport</keyword>
<keyword id="KW-0830">Ubiquinone</keyword>
<name>NDUS1_PONAB</name>
<gene>
    <name type="primary">NDUFS1</name>
</gene>
<accession>P0CB67</accession>
<accession>Q0MQG0</accession>
<accession>Q5R911</accession>